<protein>
    <recommendedName>
        <fullName evidence="1">Ribosome biogenesis protein YTM1</fullName>
    </recommendedName>
</protein>
<accession>Q0UXP3</accession>
<evidence type="ECO:0000255" key="1">
    <source>
        <dbReference type="HAMAP-Rule" id="MF_03029"/>
    </source>
</evidence>
<evidence type="ECO:0000256" key="2">
    <source>
        <dbReference type="SAM" id="MobiDB-lite"/>
    </source>
</evidence>
<sequence length="471" mass="50904">MEPEISDTKVTARFTTRDENLHLPDQDRTLLISTNLKRVNLSKILNELLGREDDRIPFDILINGQFLRTTVDEYLTKNGINAETRLEVEYTRALVPPLNVTSFEHDDWVSAVDVLSQTSRAGAWSGGSVQSGQERILSASYDGLVRVWNTSGDVLATSEAPNNGGRITSLKSAKWLSDKKIVAAGMDNTVRVFKYDEDTRTITTSLELFSHRWGVEDVAVHGPSSRILSASSDNTISLFSSNAKENPVAPSSLLPNSTAASNKRQKLSKPDRTVPARGALTTFTGHSSPVSSVIFKPDDATVAYSASHDHTLKTWDLPTAQCVDTRTTGHSLLSLCAIPSRNLIATGTSARHITLIDPRVSATQISVMTLRGHKNGVVSLDTDPSSDHGLVSGSHDGTVQIWDLRNVTTGGQVGEGQQGESVHTIHRQGQSGPGKGHGEGVKVFGVRWDKDVGIVSGGEDKKIQINRALGS</sequence>
<name>YTM1_PHANO</name>
<organism>
    <name type="scientific">Phaeosphaeria nodorum (strain SN15 / ATCC MYA-4574 / FGSC 10173)</name>
    <name type="common">Glume blotch fungus</name>
    <name type="synonym">Parastagonospora nodorum</name>
    <dbReference type="NCBI Taxonomy" id="321614"/>
    <lineage>
        <taxon>Eukaryota</taxon>
        <taxon>Fungi</taxon>
        <taxon>Dikarya</taxon>
        <taxon>Ascomycota</taxon>
        <taxon>Pezizomycotina</taxon>
        <taxon>Dothideomycetes</taxon>
        <taxon>Pleosporomycetidae</taxon>
        <taxon>Pleosporales</taxon>
        <taxon>Pleosporineae</taxon>
        <taxon>Phaeosphaeriaceae</taxon>
        <taxon>Parastagonospora</taxon>
    </lineage>
</organism>
<proteinExistence type="inferred from homology"/>
<dbReference type="EMBL" id="CH445329">
    <property type="protein sequence ID" value="EAT88676.1"/>
    <property type="molecule type" value="Genomic_DNA"/>
</dbReference>
<dbReference type="RefSeq" id="XP_001794034.1">
    <property type="nucleotide sequence ID" value="XM_001793982.1"/>
</dbReference>
<dbReference type="SMR" id="Q0UXP3"/>
<dbReference type="FunCoup" id="Q0UXP3">
    <property type="interactions" value="829"/>
</dbReference>
<dbReference type="STRING" id="321614.Q0UXP3"/>
<dbReference type="EnsemblFungi" id="SNOT_03471">
    <property type="protein sequence ID" value="SNOT_03471"/>
    <property type="gene ID" value="SNOG_03471"/>
</dbReference>
<dbReference type="GeneID" id="5970897"/>
<dbReference type="KEGG" id="pno:SNOG_03471"/>
<dbReference type="VEuPathDB" id="FungiDB:JI435_034710"/>
<dbReference type="eggNOG" id="KOG0313">
    <property type="taxonomic scope" value="Eukaryota"/>
</dbReference>
<dbReference type="HOGENOM" id="CLU_000288_57_0_1"/>
<dbReference type="InParanoid" id="Q0UXP3"/>
<dbReference type="OMA" id="DHKYVEF"/>
<dbReference type="OrthoDB" id="10251381at2759"/>
<dbReference type="Proteomes" id="UP000001055">
    <property type="component" value="Unassembled WGS sequence"/>
</dbReference>
<dbReference type="GO" id="GO:0005654">
    <property type="term" value="C:nucleoplasm"/>
    <property type="evidence" value="ECO:0007669"/>
    <property type="project" value="UniProtKB-SubCell"/>
</dbReference>
<dbReference type="GO" id="GO:0070545">
    <property type="term" value="C:PeBoW complex"/>
    <property type="evidence" value="ECO:0000318"/>
    <property type="project" value="GO_Central"/>
</dbReference>
<dbReference type="GO" id="GO:0030687">
    <property type="term" value="C:preribosome, large subunit precursor"/>
    <property type="evidence" value="ECO:0000318"/>
    <property type="project" value="GO_Central"/>
</dbReference>
<dbReference type="GO" id="GO:0043021">
    <property type="term" value="F:ribonucleoprotein complex binding"/>
    <property type="evidence" value="ECO:0007669"/>
    <property type="project" value="UniProtKB-UniRule"/>
</dbReference>
<dbReference type="GO" id="GO:0051276">
    <property type="term" value="P:chromosome organization"/>
    <property type="evidence" value="ECO:0007669"/>
    <property type="project" value="EnsemblFungi"/>
</dbReference>
<dbReference type="GO" id="GO:0000466">
    <property type="term" value="P:maturation of 5.8S rRNA from tricistronic rRNA transcript (SSU-rRNA, 5.8S rRNA, LSU-rRNA)"/>
    <property type="evidence" value="ECO:0007669"/>
    <property type="project" value="UniProtKB-UniRule"/>
</dbReference>
<dbReference type="GO" id="GO:0000463">
    <property type="term" value="P:maturation of LSU-rRNA from tricistronic rRNA transcript (SSU-rRNA, 5.8S rRNA, LSU-rRNA)"/>
    <property type="evidence" value="ECO:0007669"/>
    <property type="project" value="UniProtKB-UniRule"/>
</dbReference>
<dbReference type="GO" id="GO:0110136">
    <property type="term" value="P:protein-RNA complex remodeling"/>
    <property type="evidence" value="ECO:0007669"/>
    <property type="project" value="EnsemblFungi"/>
</dbReference>
<dbReference type="GO" id="GO:0042273">
    <property type="term" value="P:ribosomal large subunit biogenesis"/>
    <property type="evidence" value="ECO:0000318"/>
    <property type="project" value="GO_Central"/>
</dbReference>
<dbReference type="CDD" id="cd00200">
    <property type="entry name" value="WD40"/>
    <property type="match status" value="1"/>
</dbReference>
<dbReference type="Gene3D" id="2.130.10.10">
    <property type="entry name" value="YVTN repeat-like/Quinoprotein amine dehydrogenase"/>
    <property type="match status" value="1"/>
</dbReference>
<dbReference type="HAMAP" id="MF_03029">
    <property type="entry name" value="WDR12"/>
    <property type="match status" value="1"/>
</dbReference>
<dbReference type="InterPro" id="IPR020472">
    <property type="entry name" value="G-protein_beta_WD-40_rep"/>
</dbReference>
<dbReference type="InterPro" id="IPR012972">
    <property type="entry name" value="NLE"/>
</dbReference>
<dbReference type="InterPro" id="IPR015943">
    <property type="entry name" value="WD40/YVTN_repeat-like_dom_sf"/>
</dbReference>
<dbReference type="InterPro" id="IPR019775">
    <property type="entry name" value="WD40_repeat_CS"/>
</dbReference>
<dbReference type="InterPro" id="IPR036322">
    <property type="entry name" value="WD40_repeat_dom_sf"/>
</dbReference>
<dbReference type="InterPro" id="IPR001680">
    <property type="entry name" value="WD40_rpt"/>
</dbReference>
<dbReference type="InterPro" id="IPR028599">
    <property type="entry name" value="WDR12/Ytm1"/>
</dbReference>
<dbReference type="PANTHER" id="PTHR19855:SF11">
    <property type="entry name" value="RIBOSOME BIOGENESIS PROTEIN WDR12"/>
    <property type="match status" value="1"/>
</dbReference>
<dbReference type="PANTHER" id="PTHR19855">
    <property type="entry name" value="WD40 REPEAT PROTEIN 12, 37"/>
    <property type="match status" value="1"/>
</dbReference>
<dbReference type="Pfam" id="PF08154">
    <property type="entry name" value="NLE"/>
    <property type="match status" value="1"/>
</dbReference>
<dbReference type="Pfam" id="PF00400">
    <property type="entry name" value="WD40"/>
    <property type="match status" value="5"/>
</dbReference>
<dbReference type="PRINTS" id="PR00320">
    <property type="entry name" value="GPROTEINBRPT"/>
</dbReference>
<dbReference type="SMART" id="SM00320">
    <property type="entry name" value="WD40"/>
    <property type="match status" value="7"/>
</dbReference>
<dbReference type="SUPFAM" id="SSF50978">
    <property type="entry name" value="WD40 repeat-like"/>
    <property type="match status" value="1"/>
</dbReference>
<dbReference type="PROSITE" id="PS00678">
    <property type="entry name" value="WD_REPEATS_1"/>
    <property type="match status" value="3"/>
</dbReference>
<dbReference type="PROSITE" id="PS50082">
    <property type="entry name" value="WD_REPEATS_2"/>
    <property type="match status" value="2"/>
</dbReference>
<dbReference type="PROSITE" id="PS50294">
    <property type="entry name" value="WD_REPEATS_REGION"/>
    <property type="match status" value="1"/>
</dbReference>
<reference key="1">
    <citation type="journal article" date="2007" name="Plant Cell">
        <title>Dothideomycete-plant interactions illuminated by genome sequencing and EST analysis of the wheat pathogen Stagonospora nodorum.</title>
        <authorList>
            <person name="Hane J.K."/>
            <person name="Lowe R.G.T."/>
            <person name="Solomon P.S."/>
            <person name="Tan K.-C."/>
            <person name="Schoch C.L."/>
            <person name="Spatafora J.W."/>
            <person name="Crous P.W."/>
            <person name="Kodira C.D."/>
            <person name="Birren B.W."/>
            <person name="Galagan J.E."/>
            <person name="Torriani S.F.F."/>
            <person name="McDonald B.A."/>
            <person name="Oliver R.P."/>
        </authorList>
    </citation>
    <scope>NUCLEOTIDE SEQUENCE [LARGE SCALE GENOMIC DNA]</scope>
    <source>
        <strain>SN15 / ATCC MYA-4574 / FGSC 10173</strain>
    </source>
</reference>
<comment type="function">
    <text evidence="1">Component of the NOP7 complex, which is required for maturation of the 25S and 5.8S ribosomal RNAs and formation of the 60S ribosome.</text>
</comment>
<comment type="subunit">
    <text evidence="1">Component of the NOP7 complex, composed of ERB1, NOP7 and YTM1. The complex is held together by ERB1, which interacts with NOP7 via its N-terminal domain and with YTM1 via a high-affinity interaction between the seven-bladed beta-propeller domains of the 2 proteins. The NOP7 complex associates with the 66S pre-ribosome. Interacts (via UBL domain) with MDN1 (via VWFA/MIDAS domain).</text>
</comment>
<comment type="subcellular location">
    <subcellularLocation>
        <location evidence="1">Nucleus</location>
        <location evidence="1">Nucleolus</location>
    </subcellularLocation>
    <subcellularLocation>
        <location evidence="1">Nucleus</location>
        <location evidence="1">Nucleoplasm</location>
    </subcellularLocation>
</comment>
<comment type="similarity">
    <text evidence="1">Belongs to the WD repeat WDR12/YTM1 family.</text>
</comment>
<keyword id="KW-0539">Nucleus</keyword>
<keyword id="KW-0677">Repeat</keyword>
<keyword id="KW-0690">Ribosome biogenesis</keyword>
<keyword id="KW-0698">rRNA processing</keyword>
<keyword id="KW-0853">WD repeat</keyword>
<feature type="chain" id="PRO_0000369596" description="Ribosome biogenesis protein YTM1">
    <location>
        <begin position="1"/>
        <end position="471"/>
    </location>
</feature>
<feature type="repeat" description="WD 1">
    <location>
        <begin position="119"/>
        <end position="158"/>
    </location>
</feature>
<feature type="repeat" description="WD 2">
    <location>
        <begin position="165"/>
        <end position="203"/>
    </location>
</feature>
<feature type="repeat" description="WD 3">
    <location>
        <begin position="210"/>
        <end position="249"/>
    </location>
</feature>
<feature type="repeat" description="WD 4">
    <location>
        <begin position="285"/>
        <end position="325"/>
    </location>
</feature>
<feature type="repeat" description="WD 5">
    <location>
        <begin position="327"/>
        <end position="366"/>
    </location>
</feature>
<feature type="repeat" description="WD 6">
    <location>
        <begin position="372"/>
        <end position="412"/>
    </location>
</feature>
<feature type="repeat" description="WD 7">
    <location>
        <begin position="436"/>
        <end position="471"/>
    </location>
</feature>
<feature type="region of interest" description="Ubiquitin-like (UBL) domain" evidence="1">
    <location>
        <begin position="10"/>
        <end position="92"/>
    </location>
</feature>
<feature type="region of interest" description="Disordered" evidence="2">
    <location>
        <begin position="245"/>
        <end position="274"/>
    </location>
</feature>
<feature type="region of interest" description="Disordered" evidence="2">
    <location>
        <begin position="412"/>
        <end position="440"/>
    </location>
</feature>
<feature type="compositionally biased region" description="Polar residues" evidence="2">
    <location>
        <begin position="253"/>
        <end position="262"/>
    </location>
</feature>
<gene>
    <name evidence="1" type="primary">YTM1</name>
    <name type="ORF">SNOG_03471</name>
</gene>